<name>NLTP8_ARATH</name>
<evidence type="ECO:0000250" key="1"/>
<evidence type="ECO:0000255" key="2"/>
<evidence type="ECO:0000305" key="3"/>
<protein>
    <recommendedName>
        <fullName>Non-specific lipid-transfer protein 8</fullName>
        <shortName>LTP 8</shortName>
    </recommendedName>
</protein>
<accession>Q9ZPW9</accession>
<keyword id="KW-1015">Disulfide bond</keyword>
<keyword id="KW-0446">Lipid-binding</keyword>
<keyword id="KW-1185">Reference proteome</keyword>
<keyword id="KW-0732">Signal</keyword>
<keyword id="KW-0813">Transport</keyword>
<reference key="1">
    <citation type="journal article" date="1999" name="Nature">
        <title>Sequence and analysis of chromosome 2 of the plant Arabidopsis thaliana.</title>
        <authorList>
            <person name="Lin X."/>
            <person name="Kaul S."/>
            <person name="Rounsley S.D."/>
            <person name="Shea T.P."/>
            <person name="Benito M.-I."/>
            <person name="Town C.D."/>
            <person name="Fujii C.Y."/>
            <person name="Mason T.M."/>
            <person name="Bowman C.L."/>
            <person name="Barnstead M.E."/>
            <person name="Feldblyum T.V."/>
            <person name="Buell C.R."/>
            <person name="Ketchum K.A."/>
            <person name="Lee J.J."/>
            <person name="Ronning C.M."/>
            <person name="Koo H.L."/>
            <person name="Moffat K.S."/>
            <person name="Cronin L.A."/>
            <person name="Shen M."/>
            <person name="Pai G."/>
            <person name="Van Aken S."/>
            <person name="Umayam L."/>
            <person name="Tallon L.J."/>
            <person name="Gill J.E."/>
            <person name="Adams M.D."/>
            <person name="Carrera A.J."/>
            <person name="Creasy T.H."/>
            <person name="Goodman H.M."/>
            <person name="Somerville C.R."/>
            <person name="Copenhaver G.P."/>
            <person name="Preuss D."/>
            <person name="Nierman W.C."/>
            <person name="White O."/>
            <person name="Eisen J.A."/>
            <person name="Salzberg S.L."/>
            <person name="Fraser C.M."/>
            <person name="Venter J.C."/>
        </authorList>
    </citation>
    <scope>NUCLEOTIDE SEQUENCE [LARGE SCALE GENOMIC DNA]</scope>
    <source>
        <strain>cv. Columbia</strain>
    </source>
</reference>
<reference key="2">
    <citation type="journal article" date="2017" name="Plant J.">
        <title>Araport11: a complete reannotation of the Arabidopsis thaliana reference genome.</title>
        <authorList>
            <person name="Cheng C.Y."/>
            <person name="Krishnakumar V."/>
            <person name="Chan A.P."/>
            <person name="Thibaud-Nissen F."/>
            <person name="Schobel S."/>
            <person name="Town C.D."/>
        </authorList>
    </citation>
    <scope>GENOME REANNOTATION</scope>
    <source>
        <strain>cv. Columbia</strain>
    </source>
</reference>
<reference key="3">
    <citation type="submission" date="2006-07" db="EMBL/GenBank/DDBJ databases">
        <title>Large-scale analysis of RIKEN Arabidopsis full-length (RAFL) cDNAs.</title>
        <authorList>
            <person name="Totoki Y."/>
            <person name="Seki M."/>
            <person name="Ishida J."/>
            <person name="Nakajima M."/>
            <person name="Enju A."/>
            <person name="Kamiya A."/>
            <person name="Narusaka M."/>
            <person name="Shin-i T."/>
            <person name="Nakagawa M."/>
            <person name="Sakamoto N."/>
            <person name="Oishi K."/>
            <person name="Kohara Y."/>
            <person name="Kobayashi M."/>
            <person name="Toyoda A."/>
            <person name="Sakaki Y."/>
            <person name="Sakurai T."/>
            <person name="Iida K."/>
            <person name="Akiyama K."/>
            <person name="Satou M."/>
            <person name="Toyoda T."/>
            <person name="Konagaya A."/>
            <person name="Carninci P."/>
            <person name="Kawai J."/>
            <person name="Hayashizaki Y."/>
            <person name="Shinozaki K."/>
        </authorList>
    </citation>
    <scope>NUCLEOTIDE SEQUENCE [LARGE SCALE MRNA]</scope>
    <source>
        <strain>cv. Columbia</strain>
    </source>
</reference>
<reference key="4">
    <citation type="submission" date="2002-03" db="EMBL/GenBank/DDBJ databases">
        <title>Full-length cDNA from Arabidopsis thaliana.</title>
        <authorList>
            <person name="Brover V.V."/>
            <person name="Troukhan M.E."/>
            <person name="Alexandrov N.A."/>
            <person name="Lu Y.-P."/>
            <person name="Flavell R.B."/>
            <person name="Feldmann K.A."/>
        </authorList>
    </citation>
    <scope>NUCLEOTIDE SEQUENCE [LARGE SCALE MRNA]</scope>
</reference>
<reference key="5">
    <citation type="journal article" date="2008" name="Plant Physiol. Biochem.">
        <title>Plant pathogenesis-related (PR) proteins: a focus on PR peptides.</title>
        <authorList>
            <person name="Sels J."/>
            <person name="Mathys J."/>
            <person name="De Coninck B.M.A."/>
            <person name="Cammue B.P.A."/>
            <person name="De Bolle M.F.C."/>
        </authorList>
    </citation>
    <scope>GENE FAMILY</scope>
    <scope>NOMENCLATURE</scope>
</reference>
<sequence>MNVLKCLAIISVLGIFFIPRYSESAISCSVVLQDLQPCVSYLTSGSGNPPETCCDGVKSLAAATTTSADKKAACQCIKSVANSVTVKPELAQALASNCGASLPVDASPTVDCTTVG</sequence>
<proteinExistence type="inferred from homology"/>
<comment type="function">
    <text evidence="1">Plant non-specific lipid-transfer proteins transfer phospholipids as well as galactolipids across membranes. May play a role in wax or cutin deposition in the cell walls of expanding epidermal cells and certain secretory tissues (By similarity).</text>
</comment>
<comment type="similarity">
    <text evidence="3">Belongs to the plant LTP family.</text>
</comment>
<organism>
    <name type="scientific">Arabidopsis thaliana</name>
    <name type="common">Mouse-ear cress</name>
    <dbReference type="NCBI Taxonomy" id="3702"/>
    <lineage>
        <taxon>Eukaryota</taxon>
        <taxon>Viridiplantae</taxon>
        <taxon>Streptophyta</taxon>
        <taxon>Embryophyta</taxon>
        <taxon>Tracheophyta</taxon>
        <taxon>Spermatophyta</taxon>
        <taxon>Magnoliopsida</taxon>
        <taxon>eudicotyledons</taxon>
        <taxon>Gunneridae</taxon>
        <taxon>Pentapetalae</taxon>
        <taxon>rosids</taxon>
        <taxon>malvids</taxon>
        <taxon>Brassicales</taxon>
        <taxon>Brassicaceae</taxon>
        <taxon>Camelineae</taxon>
        <taxon>Arabidopsis</taxon>
    </lineage>
</organism>
<dbReference type="EMBL" id="AC006439">
    <property type="protein sequence ID" value="AAD15500.1"/>
    <property type="molecule type" value="Genomic_DNA"/>
</dbReference>
<dbReference type="EMBL" id="CP002685">
    <property type="protein sequence ID" value="AEC06762.1"/>
    <property type="molecule type" value="Genomic_DNA"/>
</dbReference>
<dbReference type="EMBL" id="AK229548">
    <property type="protein sequence ID" value="BAF01401.1"/>
    <property type="molecule type" value="mRNA"/>
</dbReference>
<dbReference type="EMBL" id="AY084369">
    <property type="protein sequence ID" value="AAM60950.1"/>
    <property type="molecule type" value="mRNA"/>
</dbReference>
<dbReference type="PIR" id="E84563">
    <property type="entry name" value="E84563"/>
</dbReference>
<dbReference type="RefSeq" id="NP_179428.1">
    <property type="nucleotide sequence ID" value="NM_127394.5"/>
</dbReference>
<dbReference type="SMR" id="Q9ZPW9"/>
<dbReference type="FunCoup" id="Q9ZPW9">
    <property type="interactions" value="38"/>
</dbReference>
<dbReference type="STRING" id="3702.Q9ZPW9"/>
<dbReference type="PaxDb" id="3702-AT2G18370.1"/>
<dbReference type="ProteomicsDB" id="249122"/>
<dbReference type="EnsemblPlants" id="AT2G18370.1">
    <property type="protein sequence ID" value="AT2G18370.1"/>
    <property type="gene ID" value="AT2G18370"/>
</dbReference>
<dbReference type="GeneID" id="816352"/>
<dbReference type="Gramene" id="AT2G18370.1">
    <property type="protein sequence ID" value="AT2G18370.1"/>
    <property type="gene ID" value="AT2G18370"/>
</dbReference>
<dbReference type="KEGG" id="ath:AT2G18370"/>
<dbReference type="Araport" id="AT2G18370"/>
<dbReference type="TAIR" id="AT2G18370"/>
<dbReference type="eggNOG" id="ENOG502S6F2">
    <property type="taxonomic scope" value="Eukaryota"/>
</dbReference>
<dbReference type="HOGENOM" id="CLU_128423_2_3_1"/>
<dbReference type="InParanoid" id="Q9ZPW9"/>
<dbReference type="OMA" id="RRATCEC"/>
<dbReference type="OrthoDB" id="1920459at2759"/>
<dbReference type="PhylomeDB" id="Q9ZPW9"/>
<dbReference type="PRO" id="PR:Q9ZPW9"/>
<dbReference type="Proteomes" id="UP000006548">
    <property type="component" value="Chromosome 2"/>
</dbReference>
<dbReference type="ExpressionAtlas" id="Q9ZPW9">
    <property type="expression patterns" value="baseline and differential"/>
</dbReference>
<dbReference type="GO" id="GO:0008289">
    <property type="term" value="F:lipid binding"/>
    <property type="evidence" value="ECO:0007669"/>
    <property type="project" value="UniProtKB-KW"/>
</dbReference>
<dbReference type="GO" id="GO:0006869">
    <property type="term" value="P:lipid transport"/>
    <property type="evidence" value="ECO:0007669"/>
    <property type="project" value="InterPro"/>
</dbReference>
<dbReference type="CDD" id="cd01960">
    <property type="entry name" value="nsLTP1"/>
    <property type="match status" value="1"/>
</dbReference>
<dbReference type="Gene3D" id="1.10.110.10">
    <property type="entry name" value="Plant lipid-transfer and hydrophobic proteins"/>
    <property type="match status" value="1"/>
</dbReference>
<dbReference type="InterPro" id="IPR036312">
    <property type="entry name" value="Bifun_inhib/LTP/seed_sf"/>
</dbReference>
<dbReference type="InterPro" id="IPR016140">
    <property type="entry name" value="Bifunc_inhib/LTP/seed_store"/>
</dbReference>
<dbReference type="InterPro" id="IPR000528">
    <property type="entry name" value="Plant_nsLTP"/>
</dbReference>
<dbReference type="PANTHER" id="PTHR33076">
    <property type="entry name" value="NON-SPECIFIC LIPID-TRANSFER PROTEIN 2-RELATED"/>
    <property type="match status" value="1"/>
</dbReference>
<dbReference type="Pfam" id="PF00234">
    <property type="entry name" value="Tryp_alpha_amyl"/>
    <property type="match status" value="1"/>
</dbReference>
<dbReference type="PRINTS" id="PR00382">
    <property type="entry name" value="LIPIDTRNSFER"/>
</dbReference>
<dbReference type="SMART" id="SM00499">
    <property type="entry name" value="AAI"/>
    <property type="match status" value="1"/>
</dbReference>
<dbReference type="SUPFAM" id="SSF47699">
    <property type="entry name" value="Bifunctional inhibitor/lipid-transfer protein/seed storage 2S albumin"/>
    <property type="match status" value="1"/>
</dbReference>
<feature type="signal peptide" evidence="2">
    <location>
        <begin position="1"/>
        <end position="24"/>
    </location>
</feature>
<feature type="chain" id="PRO_0000355617" description="Non-specific lipid-transfer protein 8">
    <location>
        <begin position="25"/>
        <end position="116"/>
    </location>
</feature>
<feature type="disulfide bond" evidence="2">
    <location>
        <begin position="28"/>
        <end position="76"/>
    </location>
</feature>
<feature type="disulfide bond" evidence="2">
    <location>
        <begin position="38"/>
        <end position="53"/>
    </location>
</feature>
<feature type="disulfide bond" evidence="2">
    <location>
        <begin position="54"/>
        <end position="98"/>
    </location>
</feature>
<feature type="disulfide bond" evidence="2">
    <location>
        <begin position="74"/>
        <end position="112"/>
    </location>
</feature>
<gene>
    <name type="primary">LTP8</name>
    <name type="ordered locus">At2g18370</name>
    <name type="ORF">T30D6.12</name>
</gene>